<evidence type="ECO:0000256" key="1">
    <source>
        <dbReference type="SAM" id="MobiDB-lite"/>
    </source>
</evidence>
<evidence type="ECO:0000305" key="2"/>
<protein>
    <recommendedName>
        <fullName>Uncharacterized protein DP238L</fullName>
    </recommendedName>
</protein>
<comment type="induction">
    <text evidence="2">Expressed in the early phase of the viral replicative cycle.</text>
</comment>
<comment type="similarity">
    <text evidence="2">Belongs to the asfivirus DP238L family.</text>
</comment>
<keyword id="KW-0244">Early protein</keyword>
<name>VFD38_ASFM2</name>
<organism>
    <name type="scientific">African swine fever virus (isolate Tick/Malawi/Lil 20-1/1983)</name>
    <name type="common">ASFV</name>
    <dbReference type="NCBI Taxonomy" id="10500"/>
    <lineage>
        <taxon>Viruses</taxon>
        <taxon>Varidnaviria</taxon>
        <taxon>Bamfordvirae</taxon>
        <taxon>Nucleocytoviricota</taxon>
        <taxon>Pokkesviricetes</taxon>
        <taxon>Asfuvirales</taxon>
        <taxon>Asfarviridae</taxon>
        <taxon>Asfivirus</taxon>
        <taxon>African swine fever virus</taxon>
    </lineage>
</organism>
<accession>P0CAM8</accession>
<reference key="1">
    <citation type="submission" date="2003-03" db="EMBL/GenBank/DDBJ databases">
        <title>African swine fever virus genomes.</title>
        <authorList>
            <person name="Kutish G.F."/>
            <person name="Rock D.L."/>
        </authorList>
    </citation>
    <scope>NUCLEOTIDE SEQUENCE [LARGE SCALE GENOMIC DNA]</scope>
</reference>
<organismHost>
    <name type="scientific">Ornithodoros</name>
    <name type="common">relapsing fever ticks</name>
    <dbReference type="NCBI Taxonomy" id="6937"/>
</organismHost>
<organismHost>
    <name type="scientific">Phacochoerus aethiopicus</name>
    <name type="common">Warthog</name>
    <dbReference type="NCBI Taxonomy" id="85517"/>
</organismHost>
<organismHost>
    <name type="scientific">Phacochoerus africanus</name>
    <name type="common">Warthog</name>
    <dbReference type="NCBI Taxonomy" id="41426"/>
</organismHost>
<organismHost>
    <name type="scientific">Potamochoerus larvatus</name>
    <name type="common">Bushpig</name>
    <dbReference type="NCBI Taxonomy" id="273792"/>
</organismHost>
<organismHost>
    <name type="scientific">Sus scrofa</name>
    <name type="common">Pig</name>
    <dbReference type="NCBI Taxonomy" id="9823"/>
</organismHost>
<sequence length="249" mass="28208">MEFARGQNLRKRTFSDMNISYKNIGIHPNSLPKNNLSRKILFKGKISKNSIPKDSLTNGKSSKNCMSKNDLAKDNSPKKGLIGKKRSAPLDISFQSMNSSMSSSTQKKTRILDEKNKDQSSSNENDRDSPVIVDITLKPSYTSKISRITEIIHKMKELNINRIEDGLSFNKKRNEHDAKNILLHTMEMVEEDCEEEEDVIIENPYLNASLSEDDTDSIVGTDYSEEEKESISETESSSDGECYSLYDSF</sequence>
<feature type="chain" id="PRO_0000373763" description="Uncharacterized protein DP238L">
    <location>
        <begin position="1"/>
        <end position="249"/>
    </location>
</feature>
<feature type="region of interest" description="Disordered" evidence="1">
    <location>
        <begin position="51"/>
        <end position="131"/>
    </location>
</feature>
<feature type="region of interest" description="Disordered" evidence="1">
    <location>
        <begin position="205"/>
        <end position="240"/>
    </location>
</feature>
<feature type="compositionally biased region" description="Polar residues" evidence="1">
    <location>
        <begin position="51"/>
        <end position="67"/>
    </location>
</feature>
<feature type="compositionally biased region" description="Low complexity" evidence="1">
    <location>
        <begin position="93"/>
        <end position="106"/>
    </location>
</feature>
<feature type="compositionally biased region" description="Basic and acidic residues" evidence="1">
    <location>
        <begin position="110"/>
        <end position="129"/>
    </location>
</feature>
<proteinExistence type="inferred from homology"/>
<dbReference type="EMBL" id="AY261361">
    <property type="status" value="NOT_ANNOTATED_CDS"/>
    <property type="molecule type" value="Genomic_DNA"/>
</dbReference>
<dbReference type="SMR" id="P0CAM8"/>
<dbReference type="Proteomes" id="UP000000860">
    <property type="component" value="Segment"/>
</dbReference>
<gene>
    <name type="ordered locus">Mal-154</name>
</gene>